<organism>
    <name type="scientific">Bradyrhizobium sp. (strain ORS 278)</name>
    <dbReference type="NCBI Taxonomy" id="114615"/>
    <lineage>
        <taxon>Bacteria</taxon>
        <taxon>Pseudomonadati</taxon>
        <taxon>Pseudomonadota</taxon>
        <taxon>Alphaproteobacteria</taxon>
        <taxon>Hyphomicrobiales</taxon>
        <taxon>Nitrobacteraceae</taxon>
        <taxon>Bradyrhizobium</taxon>
    </lineage>
</organism>
<sequence>MPVRQLPEQVINRIAAGEVVERPASVVKELVENAIDAGASRIDIFTDGGGRRKIAITDDGGGMTAADLALAVERHATSKLDDEDLLQIRTLGFRGEALPSIGSVARLSITTRHKSEPHAWGITVDCGDKSQIVPAALNQGTRVEVADLFHATPARLKFLKTDRTEAEAIREVVRRLAMARPDIAFTVAGEERAPVTWAAALPGAPGQLTRLGDILGTDFRSHAIAVRSERDHVAVEGFAAAPALTRANALGQYLFVNGRPVRDKLILGAVRAAYADYLPRDRHPVVALFVTLDPREVDANVHPAKTEVRFRNAGLVRALIIHALKEGLAREGRRTAANDGGATIAAFRPAFTPPRPSAGPMNWDWQRSPSAPIPRHDDVDSMPPAVSSAAFAEPMQAAFDVGGPRADLRLHEQPAAPDMLDRPLGAARTQIHDTYIVSQTRDGLVIVDQHAAHERIVYERLKTSLAAHGVQRQILLIPDIVELDEATVEALLARTDELAAFGLAVESFGPGAVAVRETPSLLGKINAAGLLRDLAEHMEEWGEALPLERRLMHVAATMACHGSVRAGRRLKPEEMNALLRVMEETPNSGQCNHGRPTYVELKLADVEKLFGRR</sequence>
<protein>
    <recommendedName>
        <fullName evidence="1">DNA mismatch repair protein MutL</fullName>
    </recommendedName>
</protein>
<reference key="1">
    <citation type="journal article" date="2007" name="Science">
        <title>Legumes symbioses: absence of nod genes in photosynthetic bradyrhizobia.</title>
        <authorList>
            <person name="Giraud E."/>
            <person name="Moulin L."/>
            <person name="Vallenet D."/>
            <person name="Barbe V."/>
            <person name="Cytryn E."/>
            <person name="Avarre J.-C."/>
            <person name="Jaubert M."/>
            <person name="Simon D."/>
            <person name="Cartieaux F."/>
            <person name="Prin Y."/>
            <person name="Bena G."/>
            <person name="Hannibal L."/>
            <person name="Fardoux J."/>
            <person name="Kojadinovic M."/>
            <person name="Vuillet L."/>
            <person name="Lajus A."/>
            <person name="Cruveiller S."/>
            <person name="Rouy Z."/>
            <person name="Mangenot S."/>
            <person name="Segurens B."/>
            <person name="Dossat C."/>
            <person name="Franck W.L."/>
            <person name="Chang W.-S."/>
            <person name="Saunders E."/>
            <person name="Bruce D."/>
            <person name="Richardson P."/>
            <person name="Normand P."/>
            <person name="Dreyfus B."/>
            <person name="Pignol D."/>
            <person name="Stacey G."/>
            <person name="Emerich D."/>
            <person name="Vermeglio A."/>
            <person name="Medigue C."/>
            <person name="Sadowsky M."/>
        </authorList>
    </citation>
    <scope>NUCLEOTIDE SEQUENCE [LARGE SCALE GENOMIC DNA]</scope>
    <source>
        <strain>ORS 278</strain>
    </source>
</reference>
<accession>A4Z0Q5</accession>
<name>MUTL_BRASO</name>
<gene>
    <name evidence="1" type="primary">mutL</name>
    <name type="ordered locus">BRADO6079</name>
</gene>
<feature type="chain" id="PRO_1000009996" description="DNA mismatch repair protein MutL">
    <location>
        <begin position="1"/>
        <end position="613"/>
    </location>
</feature>
<proteinExistence type="inferred from homology"/>
<comment type="function">
    <text evidence="1">This protein is involved in the repair of mismatches in DNA. It is required for dam-dependent methyl-directed DNA mismatch repair. May act as a 'molecular matchmaker', a protein that promotes the formation of a stable complex between two or more DNA-binding proteins in an ATP-dependent manner without itself being part of a final effector complex.</text>
</comment>
<comment type="similarity">
    <text evidence="1">Belongs to the DNA mismatch repair MutL/HexB family.</text>
</comment>
<dbReference type="EMBL" id="CU234118">
    <property type="protein sequence ID" value="CAL79731.1"/>
    <property type="molecule type" value="Genomic_DNA"/>
</dbReference>
<dbReference type="RefSeq" id="WP_012029623.1">
    <property type="nucleotide sequence ID" value="NC_009445.1"/>
</dbReference>
<dbReference type="SMR" id="A4Z0Q5"/>
<dbReference type="STRING" id="114615.BRADO6079"/>
<dbReference type="KEGG" id="bra:BRADO6079"/>
<dbReference type="eggNOG" id="COG0323">
    <property type="taxonomic scope" value="Bacteria"/>
</dbReference>
<dbReference type="HOGENOM" id="CLU_004131_4_2_5"/>
<dbReference type="OrthoDB" id="9763467at2"/>
<dbReference type="Proteomes" id="UP000001994">
    <property type="component" value="Chromosome"/>
</dbReference>
<dbReference type="GO" id="GO:0032300">
    <property type="term" value="C:mismatch repair complex"/>
    <property type="evidence" value="ECO:0007669"/>
    <property type="project" value="InterPro"/>
</dbReference>
<dbReference type="GO" id="GO:0005524">
    <property type="term" value="F:ATP binding"/>
    <property type="evidence" value="ECO:0007669"/>
    <property type="project" value="InterPro"/>
</dbReference>
<dbReference type="GO" id="GO:0016887">
    <property type="term" value="F:ATP hydrolysis activity"/>
    <property type="evidence" value="ECO:0007669"/>
    <property type="project" value="InterPro"/>
</dbReference>
<dbReference type="GO" id="GO:0140664">
    <property type="term" value="F:ATP-dependent DNA damage sensor activity"/>
    <property type="evidence" value="ECO:0007669"/>
    <property type="project" value="InterPro"/>
</dbReference>
<dbReference type="GO" id="GO:0030983">
    <property type="term" value="F:mismatched DNA binding"/>
    <property type="evidence" value="ECO:0007669"/>
    <property type="project" value="InterPro"/>
</dbReference>
<dbReference type="GO" id="GO:0006298">
    <property type="term" value="P:mismatch repair"/>
    <property type="evidence" value="ECO:0007669"/>
    <property type="project" value="UniProtKB-UniRule"/>
</dbReference>
<dbReference type="CDD" id="cd16926">
    <property type="entry name" value="HATPase_MutL-MLH-PMS-like"/>
    <property type="match status" value="1"/>
</dbReference>
<dbReference type="CDD" id="cd00782">
    <property type="entry name" value="MutL_Trans"/>
    <property type="match status" value="1"/>
</dbReference>
<dbReference type="FunFam" id="3.30.565.10:FF:000003">
    <property type="entry name" value="DNA mismatch repair endonuclease MutL"/>
    <property type="match status" value="1"/>
</dbReference>
<dbReference type="Gene3D" id="3.30.230.10">
    <property type="match status" value="1"/>
</dbReference>
<dbReference type="Gene3D" id="3.30.565.10">
    <property type="entry name" value="Histidine kinase-like ATPase, C-terminal domain"/>
    <property type="match status" value="1"/>
</dbReference>
<dbReference type="Gene3D" id="3.30.1540.20">
    <property type="entry name" value="MutL, C-terminal domain, dimerisation subdomain"/>
    <property type="match status" value="1"/>
</dbReference>
<dbReference type="Gene3D" id="3.30.1370.100">
    <property type="entry name" value="MutL, C-terminal domain, regulatory subdomain"/>
    <property type="match status" value="1"/>
</dbReference>
<dbReference type="HAMAP" id="MF_00149">
    <property type="entry name" value="DNA_mis_repair"/>
    <property type="match status" value="1"/>
</dbReference>
<dbReference type="InterPro" id="IPR014762">
    <property type="entry name" value="DNA_mismatch_repair_CS"/>
</dbReference>
<dbReference type="InterPro" id="IPR020667">
    <property type="entry name" value="DNA_mismatch_repair_MutL"/>
</dbReference>
<dbReference type="InterPro" id="IPR013507">
    <property type="entry name" value="DNA_mismatch_S5_2-like"/>
</dbReference>
<dbReference type="InterPro" id="IPR036890">
    <property type="entry name" value="HATPase_C_sf"/>
</dbReference>
<dbReference type="InterPro" id="IPR002099">
    <property type="entry name" value="MutL/Mlh/PMS"/>
</dbReference>
<dbReference type="InterPro" id="IPR038973">
    <property type="entry name" value="MutL/Mlh/Pms-like"/>
</dbReference>
<dbReference type="InterPro" id="IPR014790">
    <property type="entry name" value="MutL_C"/>
</dbReference>
<dbReference type="InterPro" id="IPR042120">
    <property type="entry name" value="MutL_C_dimsub"/>
</dbReference>
<dbReference type="InterPro" id="IPR042121">
    <property type="entry name" value="MutL_C_regsub"/>
</dbReference>
<dbReference type="InterPro" id="IPR037198">
    <property type="entry name" value="MutL_C_sf"/>
</dbReference>
<dbReference type="InterPro" id="IPR020568">
    <property type="entry name" value="Ribosomal_Su5_D2-typ_SF"/>
</dbReference>
<dbReference type="InterPro" id="IPR014721">
    <property type="entry name" value="Ribsml_uS5_D2-typ_fold_subgr"/>
</dbReference>
<dbReference type="NCBIfam" id="TIGR00585">
    <property type="entry name" value="mutl"/>
    <property type="match status" value="1"/>
</dbReference>
<dbReference type="NCBIfam" id="NF000953">
    <property type="entry name" value="PRK00095.2-4"/>
    <property type="match status" value="1"/>
</dbReference>
<dbReference type="PANTHER" id="PTHR10073">
    <property type="entry name" value="DNA MISMATCH REPAIR PROTEIN MLH, PMS, MUTL"/>
    <property type="match status" value="1"/>
</dbReference>
<dbReference type="PANTHER" id="PTHR10073:SF12">
    <property type="entry name" value="DNA MISMATCH REPAIR PROTEIN MLH1"/>
    <property type="match status" value="1"/>
</dbReference>
<dbReference type="Pfam" id="PF01119">
    <property type="entry name" value="DNA_mis_repair"/>
    <property type="match status" value="1"/>
</dbReference>
<dbReference type="Pfam" id="PF13589">
    <property type="entry name" value="HATPase_c_3"/>
    <property type="match status" value="1"/>
</dbReference>
<dbReference type="Pfam" id="PF08676">
    <property type="entry name" value="MutL_C"/>
    <property type="match status" value="1"/>
</dbReference>
<dbReference type="SMART" id="SM01340">
    <property type="entry name" value="DNA_mis_repair"/>
    <property type="match status" value="1"/>
</dbReference>
<dbReference type="SMART" id="SM00853">
    <property type="entry name" value="MutL_C"/>
    <property type="match status" value="1"/>
</dbReference>
<dbReference type="SUPFAM" id="SSF55874">
    <property type="entry name" value="ATPase domain of HSP90 chaperone/DNA topoisomerase II/histidine kinase"/>
    <property type="match status" value="1"/>
</dbReference>
<dbReference type="SUPFAM" id="SSF118116">
    <property type="entry name" value="DNA mismatch repair protein MutL"/>
    <property type="match status" value="1"/>
</dbReference>
<dbReference type="SUPFAM" id="SSF54211">
    <property type="entry name" value="Ribosomal protein S5 domain 2-like"/>
    <property type="match status" value="1"/>
</dbReference>
<dbReference type="PROSITE" id="PS00058">
    <property type="entry name" value="DNA_MISMATCH_REPAIR_1"/>
    <property type="match status" value="1"/>
</dbReference>
<keyword id="KW-0227">DNA damage</keyword>
<keyword id="KW-0234">DNA repair</keyword>
<keyword id="KW-1185">Reference proteome</keyword>
<evidence type="ECO:0000255" key="1">
    <source>
        <dbReference type="HAMAP-Rule" id="MF_00149"/>
    </source>
</evidence>